<comment type="function">
    <text evidence="1">Myoinhibiting neuropeptide.</text>
</comment>
<comment type="subcellular location">
    <subcellularLocation>
        <location evidence="6">Secreted</location>
    </subcellularLocation>
</comment>
<comment type="similarity">
    <text evidence="2">Belongs to the myosuppressin family.</text>
</comment>
<dbReference type="GO" id="GO:0005576">
    <property type="term" value="C:extracellular region"/>
    <property type="evidence" value="ECO:0007669"/>
    <property type="project" value="UniProtKB-SubCell"/>
</dbReference>
<dbReference type="GO" id="GO:0007218">
    <property type="term" value="P:neuropeptide signaling pathway"/>
    <property type="evidence" value="ECO:0007669"/>
    <property type="project" value="UniProtKB-KW"/>
</dbReference>
<accession>B3A0H1</accession>
<evidence type="ECO:0000250" key="1">
    <source>
        <dbReference type="UniProtKB" id="P61849"/>
    </source>
</evidence>
<evidence type="ECO:0000255" key="2"/>
<evidence type="ECO:0000269" key="3">
    <source>
    </source>
</evidence>
<evidence type="ECO:0000303" key="4">
    <source>
    </source>
</evidence>
<evidence type="ECO:0000305" key="5"/>
<evidence type="ECO:0000305" key="6">
    <source>
    </source>
</evidence>
<reference evidence="5" key="1">
    <citation type="journal article" date="2012" name="Syst. Biol.">
        <title>Peptidomics-based phylogeny and biogeography of Mantophasmatodea (Hexapoda).</title>
        <authorList>
            <person name="Predel R."/>
            <person name="Neupert S."/>
            <person name="Huetteroth W."/>
            <person name="Kahnt J."/>
            <person name="Waidelich D."/>
            <person name="Roth S."/>
        </authorList>
    </citation>
    <scope>PROTEIN SEQUENCE</scope>
    <scope>PYROGLUTAMATE FORMATION AT GLN-1</scope>
    <scope>AMIDATION AT PHE-10</scope>
    <source>
        <tissue evidence="3">Corpora cardiaca</tissue>
    </source>
</reference>
<proteinExistence type="evidence at protein level"/>
<name>NEMS_PRAMA</name>
<keyword id="KW-0027">Amidation</keyword>
<keyword id="KW-0903">Direct protein sequencing</keyword>
<keyword id="KW-0527">Neuropeptide</keyword>
<keyword id="KW-0873">Pyrrolidone carboxylic acid</keyword>
<keyword id="KW-0964">Secreted</keyword>
<feature type="peptide" id="PRO_0000421717" description="Myosuppressin" evidence="3">
    <location>
        <begin position="1"/>
        <end position="10"/>
    </location>
</feature>
<feature type="modified residue" description="Pyrrolidone carboxylic acid" evidence="3">
    <location>
        <position position="1"/>
    </location>
</feature>
<feature type="modified residue" description="Phenylalanine amide" evidence="3">
    <location>
        <position position="10"/>
    </location>
</feature>
<sequence length="10" mass="1275">QDVDHVFLRF</sequence>
<organism>
    <name type="scientific">Praedatophasma maraisi</name>
    <name type="common">Gladiator</name>
    <name type="synonym">Heel-walker</name>
    <dbReference type="NCBI Taxonomy" id="409170"/>
    <lineage>
        <taxon>Eukaryota</taxon>
        <taxon>Metazoa</taxon>
        <taxon>Ecdysozoa</taxon>
        <taxon>Arthropoda</taxon>
        <taxon>Hexapoda</taxon>
        <taxon>Insecta</taxon>
        <taxon>Pterygota</taxon>
        <taxon>Neoptera</taxon>
        <taxon>Polyneoptera</taxon>
        <taxon>Mantophasmatodea</taxon>
        <taxon>Mantophasmatidae</taxon>
        <taxon>Praedatophasma</taxon>
    </lineage>
</organism>
<protein>
    <recommendedName>
        <fullName evidence="4">Myosuppressin</fullName>
        <shortName evidence="4">MS</shortName>
    </recommendedName>
</protein>